<feature type="chain" id="PRO_0000377487" description="Electron transfer flavoprotein regulatory factor 1 homolog">
    <location>
        <begin position="1"/>
        <end position="157"/>
    </location>
</feature>
<comment type="subcellular location">
    <subcellularLocation>
        <location evidence="1">Mitochondrion</location>
    </subcellularLocation>
</comment>
<comment type="similarity">
    <text evidence="2">Belongs to the complex I LYR family.</text>
</comment>
<evidence type="ECO:0000250" key="1">
    <source>
        <dbReference type="UniProtKB" id="Q6IPR1"/>
    </source>
</evidence>
<evidence type="ECO:0000305" key="2"/>
<dbReference type="EMBL" id="AAFI02000064">
    <property type="protein sequence ID" value="EAL65219.1"/>
    <property type="molecule type" value="Genomic_DNA"/>
</dbReference>
<dbReference type="RefSeq" id="XP_638568.1">
    <property type="nucleotide sequence ID" value="XM_633476.1"/>
</dbReference>
<dbReference type="SMR" id="Q54PT6"/>
<dbReference type="STRING" id="44689.Q54PT6"/>
<dbReference type="PaxDb" id="44689-DDB0267014"/>
<dbReference type="EnsemblProtists" id="EAL65219">
    <property type="protein sequence ID" value="EAL65219"/>
    <property type="gene ID" value="DDB_G0284341"/>
</dbReference>
<dbReference type="GeneID" id="8624540"/>
<dbReference type="KEGG" id="ddi:DDB_G0284341"/>
<dbReference type="dictyBase" id="DDB_G0284341">
    <property type="gene designation" value="lyrm5"/>
</dbReference>
<dbReference type="VEuPathDB" id="AmoebaDB:DDB_G0284341"/>
<dbReference type="eggNOG" id="ENOG502RI3F">
    <property type="taxonomic scope" value="Eukaryota"/>
</dbReference>
<dbReference type="HOGENOM" id="CLU_1681185_0_0_1"/>
<dbReference type="InParanoid" id="Q54PT6"/>
<dbReference type="OMA" id="MNRFHKY"/>
<dbReference type="PRO" id="PR:Q54PT6"/>
<dbReference type="Proteomes" id="UP000002195">
    <property type="component" value="Chromosome 4"/>
</dbReference>
<dbReference type="GO" id="GO:0005739">
    <property type="term" value="C:mitochondrion"/>
    <property type="evidence" value="ECO:0000318"/>
    <property type="project" value="GO_Central"/>
</dbReference>
<dbReference type="GO" id="GO:0090324">
    <property type="term" value="P:negative regulation of oxidative phosphorylation"/>
    <property type="evidence" value="ECO:0007669"/>
    <property type="project" value="InterPro"/>
</dbReference>
<dbReference type="GO" id="GO:0022904">
    <property type="term" value="P:respiratory electron transport chain"/>
    <property type="evidence" value="ECO:0000318"/>
    <property type="project" value="GO_Central"/>
</dbReference>
<dbReference type="CDD" id="cd20265">
    <property type="entry name" value="Complex1_LYR_ETFRF1_LYRM5"/>
    <property type="match status" value="1"/>
</dbReference>
<dbReference type="InterPro" id="IPR045296">
    <property type="entry name" value="Complex1_LYR_ETFRF1_LYRM5"/>
</dbReference>
<dbReference type="InterPro" id="IPR052000">
    <property type="entry name" value="ETFRF1"/>
</dbReference>
<dbReference type="PANTHER" id="PTHR21024:SF0">
    <property type="entry name" value="ELECTRON TRANSFER FLAVOPROTEIN REGULATORY FACTOR 1"/>
    <property type="match status" value="1"/>
</dbReference>
<dbReference type="PANTHER" id="PTHR21024">
    <property type="entry name" value="GROWTH HORMONE-INDUCIBLE SOLUBLE PROTEIN-RELATED"/>
    <property type="match status" value="1"/>
</dbReference>
<organism>
    <name type="scientific">Dictyostelium discoideum</name>
    <name type="common">Social amoeba</name>
    <dbReference type="NCBI Taxonomy" id="44689"/>
    <lineage>
        <taxon>Eukaryota</taxon>
        <taxon>Amoebozoa</taxon>
        <taxon>Evosea</taxon>
        <taxon>Eumycetozoa</taxon>
        <taxon>Dictyostelia</taxon>
        <taxon>Dictyosteliales</taxon>
        <taxon>Dictyosteliaceae</taxon>
        <taxon>Dictyostelium</taxon>
    </lineage>
</organism>
<accession>Q54PT6</accession>
<reference key="1">
    <citation type="journal article" date="2005" name="Nature">
        <title>The genome of the social amoeba Dictyostelium discoideum.</title>
        <authorList>
            <person name="Eichinger L."/>
            <person name="Pachebat J.A."/>
            <person name="Gloeckner G."/>
            <person name="Rajandream M.A."/>
            <person name="Sucgang R."/>
            <person name="Berriman M."/>
            <person name="Song J."/>
            <person name="Olsen R."/>
            <person name="Szafranski K."/>
            <person name="Xu Q."/>
            <person name="Tunggal B."/>
            <person name="Kummerfeld S."/>
            <person name="Madera M."/>
            <person name="Konfortov B.A."/>
            <person name="Rivero F."/>
            <person name="Bankier A.T."/>
            <person name="Lehmann R."/>
            <person name="Hamlin N."/>
            <person name="Davies R."/>
            <person name="Gaudet P."/>
            <person name="Fey P."/>
            <person name="Pilcher K."/>
            <person name="Chen G."/>
            <person name="Saunders D."/>
            <person name="Sodergren E.J."/>
            <person name="Davis P."/>
            <person name="Kerhornou A."/>
            <person name="Nie X."/>
            <person name="Hall N."/>
            <person name="Anjard C."/>
            <person name="Hemphill L."/>
            <person name="Bason N."/>
            <person name="Farbrother P."/>
            <person name="Desany B."/>
            <person name="Just E."/>
            <person name="Morio T."/>
            <person name="Rost R."/>
            <person name="Churcher C.M."/>
            <person name="Cooper J."/>
            <person name="Haydock S."/>
            <person name="van Driessche N."/>
            <person name="Cronin A."/>
            <person name="Goodhead I."/>
            <person name="Muzny D.M."/>
            <person name="Mourier T."/>
            <person name="Pain A."/>
            <person name="Lu M."/>
            <person name="Harper D."/>
            <person name="Lindsay R."/>
            <person name="Hauser H."/>
            <person name="James K.D."/>
            <person name="Quiles M."/>
            <person name="Madan Babu M."/>
            <person name="Saito T."/>
            <person name="Buchrieser C."/>
            <person name="Wardroper A."/>
            <person name="Felder M."/>
            <person name="Thangavelu M."/>
            <person name="Johnson D."/>
            <person name="Knights A."/>
            <person name="Loulseged H."/>
            <person name="Mungall K.L."/>
            <person name="Oliver K."/>
            <person name="Price C."/>
            <person name="Quail M.A."/>
            <person name="Urushihara H."/>
            <person name="Hernandez J."/>
            <person name="Rabbinowitsch E."/>
            <person name="Steffen D."/>
            <person name="Sanders M."/>
            <person name="Ma J."/>
            <person name="Kohara Y."/>
            <person name="Sharp S."/>
            <person name="Simmonds M.N."/>
            <person name="Spiegler S."/>
            <person name="Tivey A."/>
            <person name="Sugano S."/>
            <person name="White B."/>
            <person name="Walker D."/>
            <person name="Woodward J.R."/>
            <person name="Winckler T."/>
            <person name="Tanaka Y."/>
            <person name="Shaulsky G."/>
            <person name="Schleicher M."/>
            <person name="Weinstock G.M."/>
            <person name="Rosenthal A."/>
            <person name="Cox E.C."/>
            <person name="Chisholm R.L."/>
            <person name="Gibbs R.A."/>
            <person name="Loomis W.F."/>
            <person name="Platzer M."/>
            <person name="Kay R.R."/>
            <person name="Williams J.G."/>
            <person name="Dear P.H."/>
            <person name="Noegel A.A."/>
            <person name="Barrell B.G."/>
            <person name="Kuspa A."/>
        </authorList>
    </citation>
    <scope>NUCLEOTIDE SEQUENCE [LARGE SCALE GENOMIC DNA]</scope>
    <source>
        <strain>AX4</strain>
    </source>
</reference>
<proteinExistence type="inferred from homology"/>
<name>ETFR1_DICDI</name>
<gene>
    <name evidence="1" type="primary">etfrf1</name>
    <name evidence="1" type="synonym">lyrm5</name>
    <name type="ORF">DDB_G0284341</name>
</gene>
<protein>
    <recommendedName>
        <fullName evidence="1">Electron transfer flavoprotein regulatory factor 1 homolog</fullName>
    </recommendedName>
    <alternativeName>
        <fullName evidence="1">LYR motif-containing protein 5</fullName>
    </alternativeName>
</protein>
<sequence>MENTHSMISFKTLNKLKIQQLFSIKNKSFYSTSSPISSTVNSSGNDNIDIENDKEIKKKNRLIVKDLYKQLMYLGRVGFLGVDYIRDKAKPQFISNANLTDNNKINECIERTKYVIKEIEAMNRFHKYRNLKKSYDLEFQKVNDNFLNLDNDQNKIK</sequence>
<keyword id="KW-0496">Mitochondrion</keyword>
<keyword id="KW-1185">Reference proteome</keyword>